<organism>
    <name type="scientific">Shigella sonnei (strain Ss046)</name>
    <dbReference type="NCBI Taxonomy" id="300269"/>
    <lineage>
        <taxon>Bacteria</taxon>
        <taxon>Pseudomonadati</taxon>
        <taxon>Pseudomonadota</taxon>
        <taxon>Gammaproteobacteria</taxon>
        <taxon>Enterobacterales</taxon>
        <taxon>Enterobacteriaceae</taxon>
        <taxon>Shigella</taxon>
    </lineage>
</organism>
<gene>
    <name evidence="1" type="primary">ves</name>
    <name type="ordered locus">SSON_1416</name>
</gene>
<keyword id="KW-1185">Reference proteome</keyword>
<reference key="1">
    <citation type="journal article" date="2005" name="Nucleic Acids Res.">
        <title>Genome dynamics and diversity of Shigella species, the etiologic agents of bacillary dysentery.</title>
        <authorList>
            <person name="Yang F."/>
            <person name="Yang J."/>
            <person name="Zhang X."/>
            <person name="Chen L."/>
            <person name="Jiang Y."/>
            <person name="Yan Y."/>
            <person name="Tang X."/>
            <person name="Wang J."/>
            <person name="Xiong Z."/>
            <person name="Dong J."/>
            <person name="Xue Y."/>
            <person name="Zhu Y."/>
            <person name="Xu X."/>
            <person name="Sun L."/>
            <person name="Chen S."/>
            <person name="Nie H."/>
            <person name="Peng J."/>
            <person name="Xu J."/>
            <person name="Wang Y."/>
            <person name="Yuan Z."/>
            <person name="Wen Y."/>
            <person name="Yao Z."/>
            <person name="Shen Y."/>
            <person name="Qiang B."/>
            <person name="Hou Y."/>
            <person name="Yu J."/>
            <person name="Jin Q."/>
        </authorList>
    </citation>
    <scope>NUCLEOTIDE SEQUENCE [LARGE SCALE GENOMIC DNA]</scope>
    <source>
        <strain>Ss046</strain>
    </source>
</reference>
<evidence type="ECO:0000255" key="1">
    <source>
        <dbReference type="HAMAP-Rule" id="MF_01591"/>
    </source>
</evidence>
<evidence type="ECO:0000305" key="2"/>
<proteinExistence type="inferred from homology"/>
<accession>Q3Z289</accession>
<name>VES_SHISS</name>
<sequence length="191" mass="21601">MEYFDMRKMSVNLWRNAAGETREICTFPPAKRDFYWRASIASIAANGEFSLFPGMERIVTLLEGGEMLLESADRFNHTLKPLQPFAFAADQVVKAKLTEGQMSMDFNIMTRLDVCKAKVRIAERTFTTFGSRGGVVFVINGAWQLGDKLLTTDQGACWFDGRHTLRLLQPQGKLLFSEINWLAGHSPDQVQ</sequence>
<protein>
    <recommendedName>
        <fullName evidence="1">Protein Ves</fullName>
    </recommendedName>
</protein>
<feature type="chain" id="PRO_0000315012" description="Protein Ves">
    <location>
        <begin position="1"/>
        <end position="191"/>
    </location>
</feature>
<comment type="similarity">
    <text evidence="1">Belongs to the Ves family.</text>
</comment>
<comment type="sequence caution" evidence="2">
    <conflict type="erroneous initiation">
        <sequence resource="EMBL-CDS" id="AAZ88123"/>
    </conflict>
</comment>
<dbReference type="EMBL" id="CP000038">
    <property type="protein sequence ID" value="AAZ88123.1"/>
    <property type="status" value="ALT_INIT"/>
    <property type="molecule type" value="Genomic_DNA"/>
</dbReference>
<dbReference type="RefSeq" id="WP_004983350.1">
    <property type="nucleotide sequence ID" value="NC_007384.1"/>
</dbReference>
<dbReference type="SMR" id="Q3Z289"/>
<dbReference type="GeneID" id="93775955"/>
<dbReference type="KEGG" id="ssn:SSON_1416"/>
<dbReference type="HOGENOM" id="CLU_090931_5_0_6"/>
<dbReference type="Proteomes" id="UP000002529">
    <property type="component" value="Chromosome"/>
</dbReference>
<dbReference type="CDD" id="cd20293">
    <property type="entry name" value="cupin_HutD_N"/>
    <property type="match status" value="1"/>
</dbReference>
<dbReference type="Gene3D" id="2.60.120.10">
    <property type="entry name" value="Jelly Rolls"/>
    <property type="match status" value="1"/>
</dbReference>
<dbReference type="HAMAP" id="MF_01591">
    <property type="entry name" value="Ves"/>
    <property type="match status" value="1"/>
</dbReference>
<dbReference type="InterPro" id="IPR014710">
    <property type="entry name" value="RmlC-like_jellyroll"/>
</dbReference>
<dbReference type="InterPro" id="IPR011051">
    <property type="entry name" value="RmlC_Cupin_sf"/>
</dbReference>
<dbReference type="InterPro" id="IPR010282">
    <property type="entry name" value="Uncharacterised_HutD/Ves"/>
</dbReference>
<dbReference type="InterPro" id="IPR023482">
    <property type="entry name" value="Uncharacterised_Ves"/>
</dbReference>
<dbReference type="NCBIfam" id="NF008488">
    <property type="entry name" value="PRK11396.1"/>
    <property type="match status" value="1"/>
</dbReference>
<dbReference type="PANTHER" id="PTHR37943">
    <property type="entry name" value="PROTEIN VES"/>
    <property type="match status" value="1"/>
</dbReference>
<dbReference type="PANTHER" id="PTHR37943:SF1">
    <property type="entry name" value="PROTEIN VES"/>
    <property type="match status" value="1"/>
</dbReference>
<dbReference type="Pfam" id="PF05962">
    <property type="entry name" value="HutD"/>
    <property type="match status" value="1"/>
</dbReference>
<dbReference type="SUPFAM" id="SSF51182">
    <property type="entry name" value="RmlC-like cupins"/>
    <property type="match status" value="1"/>
</dbReference>